<comment type="function">
    <text evidence="1 10">Low-affinity transporter for external inorganic phosphate (Pi) probably involved in the acquisition of phosphate released by arbuscular mycorrhizal (AM) fungi (e.g. Rhizophagus irregularis and Glomus intraradices) during AM symbiosis (Probable). Acts as a Pi-sensing machinery at the root tip level, independently of AM fungi, involved in the regulation of early root branching and lateral roots formation (By similarity).</text>
</comment>
<comment type="catalytic activity">
    <reaction evidence="2">
        <text>phosphate(in) + H(+)(in) = phosphate(out) + H(+)(out)</text>
        <dbReference type="Rhea" id="RHEA:29939"/>
        <dbReference type="ChEBI" id="CHEBI:15378"/>
        <dbReference type="ChEBI" id="CHEBI:43474"/>
    </reaction>
    <physiologicalReaction direction="right-to-left" evidence="2">
        <dbReference type="Rhea" id="RHEA:29941"/>
    </physiologicalReaction>
</comment>
<comment type="subcellular location">
    <subcellularLocation>
        <location evidence="2">Cell membrane</location>
        <topology evidence="3">Multi-pass membrane protein</topology>
    </subcellularLocation>
    <text evidence="2">Present on the periarbuscular membrane in cells containing arbuscules during arbuscular mycorrhizal (AM) symbiosis with AM fungi.</text>
</comment>
<comment type="induction">
    <text evidence="6 7">Regulated positively by RAM1 during arbuscular mycorrhiza (AM) formation after inoculation with AM fungi (e.g. Rhizophagus irregularis and Glomus intraradices).</text>
</comment>
<comment type="miscellaneous">
    <text evidence="9">Although related to the sugar transporter family, it does not transport sugars.</text>
</comment>
<comment type="similarity">
    <text evidence="9">Belongs to the major facilitator superfamily. Phosphate:H(+) symporter (TC 2.A.1.9) family.</text>
</comment>
<dbReference type="EMBL" id="EU532763">
    <property type="protein sequence ID" value="ACB37441.1"/>
    <property type="molecule type" value="Genomic_DNA"/>
</dbReference>
<dbReference type="SMR" id="B2CPI6"/>
<dbReference type="GlyCosmos" id="B2CPI6">
    <property type="glycosylation" value="1 site, No reported glycans"/>
</dbReference>
<dbReference type="GO" id="GO:0085042">
    <property type="term" value="C:periarbuscular membrane"/>
    <property type="evidence" value="ECO:0000250"/>
    <property type="project" value="UniProtKB"/>
</dbReference>
<dbReference type="GO" id="GO:0005886">
    <property type="term" value="C:plasma membrane"/>
    <property type="evidence" value="ECO:0007669"/>
    <property type="project" value="UniProtKB-SubCell"/>
</dbReference>
<dbReference type="GO" id="GO:0015293">
    <property type="term" value="F:symporter activity"/>
    <property type="evidence" value="ECO:0007669"/>
    <property type="project" value="UniProtKB-KW"/>
</dbReference>
<dbReference type="GO" id="GO:0036377">
    <property type="term" value="P:arbuscular mycorrhizal association"/>
    <property type="evidence" value="ECO:0000314"/>
    <property type="project" value="UniProtKB"/>
</dbReference>
<dbReference type="GO" id="GO:0006817">
    <property type="term" value="P:phosphate ion transport"/>
    <property type="evidence" value="ECO:0000314"/>
    <property type="project" value="UniProtKB"/>
</dbReference>
<dbReference type="GO" id="GO:0009610">
    <property type="term" value="P:response to symbiotic fungus"/>
    <property type="evidence" value="ECO:0000314"/>
    <property type="project" value="UniProtKB"/>
</dbReference>
<dbReference type="CDD" id="cd17364">
    <property type="entry name" value="MFS_PhT"/>
    <property type="match status" value="1"/>
</dbReference>
<dbReference type="FunFam" id="1.20.1250.20:FF:000175">
    <property type="entry name" value="Inorganic phosphate transporter 1-6"/>
    <property type="match status" value="1"/>
</dbReference>
<dbReference type="Gene3D" id="1.20.1250.20">
    <property type="entry name" value="MFS general substrate transporter like domains"/>
    <property type="match status" value="1"/>
</dbReference>
<dbReference type="InterPro" id="IPR020846">
    <property type="entry name" value="MFS_dom"/>
</dbReference>
<dbReference type="InterPro" id="IPR005828">
    <property type="entry name" value="MFS_sugar_transport-like"/>
</dbReference>
<dbReference type="InterPro" id="IPR036259">
    <property type="entry name" value="MFS_trans_sf"/>
</dbReference>
<dbReference type="PANTHER" id="PTHR24064">
    <property type="entry name" value="SOLUTE CARRIER FAMILY 22 MEMBER"/>
    <property type="match status" value="1"/>
</dbReference>
<dbReference type="Pfam" id="PF00083">
    <property type="entry name" value="Sugar_tr"/>
    <property type="match status" value="1"/>
</dbReference>
<dbReference type="SUPFAM" id="SSF103473">
    <property type="entry name" value="MFS general substrate transporter"/>
    <property type="match status" value="1"/>
</dbReference>
<dbReference type="PROSITE" id="PS50850">
    <property type="entry name" value="MFS"/>
    <property type="match status" value="1"/>
</dbReference>
<sequence length="529" mass="58875">MASDNLVVLNALDTARTQWYHVTAVIIAGMGFFTDAYDLFCISTVSKLLGRLYYYDPSTKAPGKLPHMANNWVIGVALVGTLSGQLVFGWLGDKLGRKKVYGLTLILMVICALCSGLSLGYSPKSVIGTLCFFRFWLGFGIGGDYPLSATIMSEYANKSTRGAFIAAVFAMQGVGIIFAGLVSMTISKVFLMNFEGKPFNVDEVLSTEPEADYVWRIVLMLGALPALLTYYWRMKMPETGRYTAIIEGNAKQAAIDMGKVLDIEIQAEGDKLAQFKAANEYSLLSNEFFQRHGLHLIGTMSTWFLLDIAFYSQNLTQKDIFPVMGLTSKANTISALREMFETSRAMFVIALFGTFPGYWFTVFFIEKIGRFKIQLVGFFMMSVFMAIIGVKYDYLRNKEHKWTFAALYGLTFFFANFGPNSTTFVLPAELFPTRVRSTCHALSAALGKAGAMISAFGIQQYTQDQDVRKIKTAMLLLAFTNMVGFCCTFLVTETKGRSLEEISGEDGRQNETQMKTTRPVSGHPDDGWE</sequence>
<proteinExistence type="evidence at transcript level"/>
<protein>
    <recommendedName>
        <fullName evidence="8">Low affinity inorganic phosphate transporter 4</fullName>
        <shortName evidence="8">PhPT4</shortName>
        <shortName evidence="9">PhPht1;4</shortName>
    </recommendedName>
    <alternativeName>
        <fullName evidence="9">Arbuscular mycorrhiza-induced phosphate transporter PT4</fullName>
        <shortName evidence="9">AM-induced phosphate transporter PT4</shortName>
    </alternativeName>
    <alternativeName>
        <fullName evidence="9">H(+)/Pi cotransporter PT4</fullName>
    </alternativeName>
    <alternativeName>
        <fullName evidence="8">Protein Pi TRANSPORTER DOWN-REGULATED</fullName>
    </alternativeName>
</protein>
<gene>
    <name evidence="8" type="primary">PT4</name>
    <name evidence="8" type="synonym">PTD1</name>
</gene>
<feature type="chain" id="PRO_0000450035" description="Low affinity inorganic phosphate transporter 4">
    <location>
        <begin position="1"/>
        <end position="529"/>
    </location>
</feature>
<feature type="topological domain" description="Cytoplasmic" evidence="9">
    <location>
        <begin position="1"/>
        <end position="21"/>
    </location>
</feature>
<feature type="transmembrane region" description="Helical; Name=1" evidence="3">
    <location>
        <begin position="22"/>
        <end position="42"/>
    </location>
</feature>
<feature type="topological domain" description="Extracellular" evidence="9">
    <location>
        <begin position="43"/>
        <end position="71"/>
    </location>
</feature>
<feature type="transmembrane region" description="Helical; Name=2" evidence="3">
    <location>
        <begin position="72"/>
        <end position="92"/>
    </location>
</feature>
<feature type="topological domain" description="Cytoplasmic" evidence="9">
    <location>
        <begin position="93"/>
        <end position="99"/>
    </location>
</feature>
<feature type="transmembrane region" description="Helical; Name=3" evidence="3">
    <location>
        <begin position="100"/>
        <end position="120"/>
    </location>
</feature>
<feature type="topological domain" description="Extracellular" evidence="9">
    <location>
        <begin position="121"/>
        <end position="125"/>
    </location>
</feature>
<feature type="transmembrane region" description="Helical; Name=4" evidence="3">
    <location>
        <begin position="126"/>
        <end position="146"/>
    </location>
</feature>
<feature type="topological domain" description="Cytoplasmic" evidence="9">
    <location>
        <begin position="147"/>
        <end position="161"/>
    </location>
</feature>
<feature type="transmembrane region" description="Helical; Name=5" evidence="3">
    <location>
        <begin position="162"/>
        <end position="182"/>
    </location>
</feature>
<feature type="topological domain" description="Extracellular" evidence="9">
    <location>
        <begin position="183"/>
        <end position="211"/>
    </location>
</feature>
<feature type="transmembrane region" description="Helical; Name=6" evidence="3">
    <location>
        <begin position="212"/>
        <end position="232"/>
    </location>
</feature>
<feature type="topological domain" description="Cytoplasmic" evidence="9">
    <location>
        <begin position="233"/>
        <end position="291"/>
    </location>
</feature>
<feature type="transmembrane region" description="Helical; Name=7" evidence="3">
    <location>
        <begin position="292"/>
        <end position="312"/>
    </location>
</feature>
<feature type="topological domain" description="Extracellular" evidence="9">
    <location>
        <begin position="313"/>
        <end position="344"/>
    </location>
</feature>
<feature type="transmembrane region" description="Helical; Name=8" evidence="3">
    <location>
        <begin position="345"/>
        <end position="365"/>
    </location>
</feature>
<feature type="topological domain" description="Cytoplasmic" evidence="9">
    <location>
        <begin position="366"/>
        <end position="374"/>
    </location>
</feature>
<feature type="transmembrane region" description="Helical; Name=9" evidence="3">
    <location>
        <begin position="375"/>
        <end position="395"/>
    </location>
</feature>
<feature type="topological domain" description="Extracellular" evidence="9">
    <location>
        <begin position="396"/>
        <end position="405"/>
    </location>
</feature>
<feature type="transmembrane region" description="Helical; Name=10" evidence="3">
    <location>
        <begin position="406"/>
        <end position="426"/>
    </location>
</feature>
<feature type="topological domain" description="Cytoplasmic" evidence="9">
    <location>
        <begin position="427"/>
        <end position="437"/>
    </location>
</feature>
<feature type="transmembrane region" description="Helical; Name=11" evidence="3">
    <location>
        <begin position="438"/>
        <end position="458"/>
    </location>
</feature>
<feature type="topological domain" description="Extracellular" evidence="9">
    <location>
        <begin position="459"/>
        <end position="471"/>
    </location>
</feature>
<feature type="transmembrane region" description="Helical; Name=12" evidence="3">
    <location>
        <begin position="472"/>
        <end position="492"/>
    </location>
</feature>
<feature type="topological domain" description="Cytoplasmic" evidence="9">
    <location>
        <begin position="493"/>
        <end position="529"/>
    </location>
</feature>
<feature type="region of interest" description="Disordered" evidence="5">
    <location>
        <begin position="501"/>
        <end position="529"/>
    </location>
</feature>
<feature type="compositionally biased region" description="Polar residues" evidence="5">
    <location>
        <begin position="510"/>
        <end position="519"/>
    </location>
</feature>
<feature type="glycosylation site" description="N-linked (GlcNAc...) asparagine" evidence="4">
    <location>
        <position position="314"/>
    </location>
</feature>
<name>PHT14_PETHY</name>
<keyword id="KW-1003">Cell membrane</keyword>
<keyword id="KW-0325">Glycoprotein</keyword>
<keyword id="KW-0472">Membrane</keyword>
<keyword id="KW-0592">Phosphate transport</keyword>
<keyword id="KW-0769">Symport</keyword>
<keyword id="KW-0812">Transmembrane</keyword>
<keyword id="KW-1133">Transmembrane helix</keyword>
<keyword id="KW-0813">Transport</keyword>
<organism>
    <name type="scientific">Petunia hybrida</name>
    <name type="common">Petunia</name>
    <dbReference type="NCBI Taxonomy" id="4102"/>
    <lineage>
        <taxon>Eukaryota</taxon>
        <taxon>Viridiplantae</taxon>
        <taxon>Streptophyta</taxon>
        <taxon>Embryophyta</taxon>
        <taxon>Tracheophyta</taxon>
        <taxon>Spermatophyta</taxon>
        <taxon>Magnoliopsida</taxon>
        <taxon>eudicotyledons</taxon>
        <taxon>Gunneridae</taxon>
        <taxon>Pentapetalae</taxon>
        <taxon>asterids</taxon>
        <taxon>lamiids</taxon>
        <taxon>Solanales</taxon>
        <taxon>Solanaceae</taxon>
        <taxon>Petunioideae</taxon>
        <taxon>Petunia</taxon>
    </lineage>
</organism>
<reference key="1">
    <citation type="journal article" date="2008" name="Plant J.">
        <title>A transgenic dTph1 insertional mutagenesis system for forward genetics in mycorrhizal phosphate transport of Petunia.</title>
        <authorList>
            <person name="Wegmueller S."/>
            <person name="Svistoonoff S."/>
            <person name="Reinhardt D."/>
            <person name="Stuurman J."/>
            <person name="Amrhein N."/>
            <person name="Bucher M."/>
        </authorList>
    </citation>
    <scope>NUCLEOTIDE SEQUENCE [GENOMIC DNA]</scope>
    <scope>INDUCTION BY ARBUSCULAR MYCORRHIZAL FUNGI</scope>
    <source>
        <strain>cv. W115</strain>
        <strain>cv. W138</strain>
    </source>
</reference>
<reference key="2">
    <citation type="journal article" date="2015" name="Plant Physiol.">
        <title>The Petunia GRAS transcription factor ATA/RAM1 regulates symbiotic gene expression and fungal morphogenesis in arbuscular mycorrhiza.</title>
        <authorList>
            <person name="Rich M.K."/>
            <person name="Schorderet M."/>
            <person name="Bapaume L."/>
            <person name="Falquet L."/>
            <person name="Morel P."/>
            <person name="Vandenbussche M."/>
            <person name="Reinhardt D."/>
        </authorList>
    </citation>
    <scope>INDUCTION BY RAM1 AND RHIZOPHAGUS IRREGULARIS</scope>
    <source>
        <strain>cv. W138</strain>
    </source>
</reference>
<accession>B2CPI6</accession>
<evidence type="ECO:0000250" key="1">
    <source>
        <dbReference type="UniProtKB" id="B5RHV8"/>
    </source>
</evidence>
<evidence type="ECO:0000250" key="2">
    <source>
        <dbReference type="UniProtKB" id="Q8GSG4"/>
    </source>
</evidence>
<evidence type="ECO:0000255" key="3"/>
<evidence type="ECO:0000255" key="4">
    <source>
        <dbReference type="PROSITE-ProRule" id="PRU00498"/>
    </source>
</evidence>
<evidence type="ECO:0000256" key="5">
    <source>
        <dbReference type="SAM" id="MobiDB-lite"/>
    </source>
</evidence>
<evidence type="ECO:0000269" key="6">
    <source>
    </source>
</evidence>
<evidence type="ECO:0000269" key="7">
    <source>
    </source>
</evidence>
<evidence type="ECO:0000303" key="8">
    <source>
    </source>
</evidence>
<evidence type="ECO:0000305" key="9"/>
<evidence type="ECO:0000305" key="10">
    <source>
    </source>
</evidence>